<dbReference type="EMBL" id="Z67753">
    <property type="protein sequence ID" value="CAA91636.1"/>
    <property type="molecule type" value="Genomic_DNA"/>
</dbReference>
<dbReference type="PIR" id="S78263">
    <property type="entry name" value="S78263"/>
</dbReference>
<dbReference type="SMR" id="P49547"/>
<dbReference type="GO" id="GO:0009507">
    <property type="term" value="C:chloroplast"/>
    <property type="evidence" value="ECO:0007669"/>
    <property type="project" value="UniProtKB-SubCell"/>
</dbReference>
<dbReference type="GO" id="GO:1990904">
    <property type="term" value="C:ribonucleoprotein complex"/>
    <property type="evidence" value="ECO:0007669"/>
    <property type="project" value="UniProtKB-KW"/>
</dbReference>
<dbReference type="GO" id="GO:0005840">
    <property type="term" value="C:ribosome"/>
    <property type="evidence" value="ECO:0007669"/>
    <property type="project" value="UniProtKB-KW"/>
</dbReference>
<dbReference type="GO" id="GO:0019843">
    <property type="term" value="F:rRNA binding"/>
    <property type="evidence" value="ECO:0007669"/>
    <property type="project" value="UniProtKB-UniRule"/>
</dbReference>
<dbReference type="GO" id="GO:0003735">
    <property type="term" value="F:structural constituent of ribosome"/>
    <property type="evidence" value="ECO:0007669"/>
    <property type="project" value="InterPro"/>
</dbReference>
<dbReference type="GO" id="GO:0006412">
    <property type="term" value="P:translation"/>
    <property type="evidence" value="ECO:0007669"/>
    <property type="project" value="UniProtKB-UniRule"/>
</dbReference>
<dbReference type="FunFam" id="3.30.1440.10:FF:000001">
    <property type="entry name" value="50S ribosomal protein L5"/>
    <property type="match status" value="1"/>
</dbReference>
<dbReference type="Gene3D" id="3.30.1440.10">
    <property type="match status" value="1"/>
</dbReference>
<dbReference type="HAMAP" id="MF_01333_B">
    <property type="entry name" value="Ribosomal_uL5_B"/>
    <property type="match status" value="1"/>
</dbReference>
<dbReference type="InterPro" id="IPR002132">
    <property type="entry name" value="Ribosomal_uL5"/>
</dbReference>
<dbReference type="InterPro" id="IPR020930">
    <property type="entry name" value="Ribosomal_uL5_bac-type"/>
</dbReference>
<dbReference type="InterPro" id="IPR031309">
    <property type="entry name" value="Ribosomal_uL5_C"/>
</dbReference>
<dbReference type="InterPro" id="IPR022803">
    <property type="entry name" value="Ribosomal_uL5_dom_sf"/>
</dbReference>
<dbReference type="InterPro" id="IPR031310">
    <property type="entry name" value="Ribosomal_uL5_N"/>
</dbReference>
<dbReference type="NCBIfam" id="NF000585">
    <property type="entry name" value="PRK00010.1"/>
    <property type="match status" value="1"/>
</dbReference>
<dbReference type="PANTHER" id="PTHR11994">
    <property type="entry name" value="60S RIBOSOMAL PROTEIN L11-RELATED"/>
    <property type="match status" value="1"/>
</dbReference>
<dbReference type="Pfam" id="PF00281">
    <property type="entry name" value="Ribosomal_L5"/>
    <property type="match status" value="1"/>
</dbReference>
<dbReference type="Pfam" id="PF00673">
    <property type="entry name" value="Ribosomal_L5_C"/>
    <property type="match status" value="1"/>
</dbReference>
<dbReference type="SUPFAM" id="SSF55282">
    <property type="entry name" value="RL5-like"/>
    <property type="match status" value="1"/>
</dbReference>
<accession>P49547</accession>
<sequence>MRNQHSLEEIAEIHSLLEDIKGEYEKGIRAVIKKNNPELFGNPHTIPKLQKIQINRGLGLAAQNTNILKKSINEFTAITGQKPIITRAKKAIAGFKIRENMELGLTVTLRGSKMYSFLTKLIFFTFAQIRDFRGLSVRSFDKAGNYTLGLKEQLIFPEIDYDDVDQTQGFSITLVFSSTAPKSRSKTMDRVLNGMVLFKFLRFPLNDSGYYDKYSSFSEVSQAWDRKKHLRRKRWSQE</sequence>
<proteinExistence type="inferred from homology"/>
<protein>
    <recommendedName>
        <fullName evidence="2">Large ribosomal subunit protein uL5c</fullName>
    </recommendedName>
    <alternativeName>
        <fullName>50S ribosomal protein L5, chloroplastic</fullName>
    </alternativeName>
</protein>
<geneLocation type="chloroplast"/>
<feature type="chain" id="PRO_0000125046" description="Large ribosomal subunit protein uL5c">
    <location>
        <begin position="1"/>
        <end position="238"/>
    </location>
</feature>
<reference key="1">
    <citation type="journal article" date="1995" name="Plant Mol. Biol. Rep.">
        <title>The chloroplast genome of a chlorophyll a+c-containing alga, Odontella sinensis.</title>
        <authorList>
            <person name="Kowallik K.V."/>
            <person name="Stoebe B."/>
            <person name="Schaffran I."/>
            <person name="Kroth-Pancic P."/>
            <person name="Freier U."/>
        </authorList>
    </citation>
    <scope>NUCLEOTIDE SEQUENCE [LARGE SCALE GENOMIC DNA]</scope>
</reference>
<name>RK5_TRICV</name>
<gene>
    <name type="primary">rpl5</name>
</gene>
<keyword id="KW-0150">Chloroplast</keyword>
<keyword id="KW-0934">Plastid</keyword>
<keyword id="KW-0687">Ribonucleoprotein</keyword>
<keyword id="KW-0689">Ribosomal protein</keyword>
<keyword id="KW-0694">RNA-binding</keyword>
<keyword id="KW-0699">rRNA-binding</keyword>
<evidence type="ECO:0000250" key="1"/>
<evidence type="ECO:0000305" key="2"/>
<comment type="function">
    <text evidence="1">Binds 5S rRNA, forms part of the central protuberance of the 50S subunit.</text>
</comment>
<comment type="subunit">
    <text evidence="1">Part of the 50S ribosomal subunit; contacts the 5S rRNA.</text>
</comment>
<comment type="subcellular location">
    <subcellularLocation>
        <location>Plastid</location>
        <location>Chloroplast</location>
    </subcellularLocation>
</comment>
<comment type="similarity">
    <text evidence="2">Belongs to the universal ribosomal protein uL5 family.</text>
</comment>
<organism>
    <name type="scientific">Trieres chinensis</name>
    <name type="common">Marine centric diatom</name>
    <name type="synonym">Odontella sinensis</name>
    <dbReference type="NCBI Taxonomy" id="1514140"/>
    <lineage>
        <taxon>Eukaryota</taxon>
        <taxon>Sar</taxon>
        <taxon>Stramenopiles</taxon>
        <taxon>Ochrophyta</taxon>
        <taxon>Bacillariophyta</taxon>
        <taxon>Mediophyceae</taxon>
        <taxon>Biddulphiophycidae</taxon>
        <taxon>Eupodiscales</taxon>
        <taxon>Parodontellaceae</taxon>
        <taxon>Trieres</taxon>
    </lineage>
</organism>